<keyword id="KW-0001">2Fe-2S</keyword>
<keyword id="KW-0274">FAD</keyword>
<keyword id="KW-0285">Flavoprotein</keyword>
<keyword id="KW-0408">Iron</keyword>
<keyword id="KW-0411">Iron-sulfur</keyword>
<keyword id="KW-0479">Metal-binding</keyword>
<keyword id="KW-0500">Molybdenum</keyword>
<keyword id="KW-0520">NAD</keyword>
<keyword id="KW-0560">Oxidoreductase</keyword>
<keyword id="KW-0576">Peroxisome</keyword>
<keyword id="KW-1185">Reference proteome</keyword>
<feature type="chain" id="PRO_0000166080" description="Xanthine dehydrogenase">
    <location>
        <begin position="1"/>
        <end position="1343"/>
    </location>
</feature>
<feature type="domain" description="2Fe-2S ferredoxin-type" evidence="3">
    <location>
        <begin position="8"/>
        <end position="95"/>
    </location>
</feature>
<feature type="domain" description="FAD-binding PCMH-type" evidence="4">
    <location>
        <begin position="235"/>
        <end position="424"/>
    </location>
</feature>
<feature type="active site" description="Proton acceptor" evidence="1">
    <location>
        <position position="1275"/>
    </location>
</feature>
<feature type="binding site" evidence="2">
    <location>
        <position position="47"/>
    </location>
    <ligand>
        <name>[2Fe-2S] cluster</name>
        <dbReference type="ChEBI" id="CHEBI:190135"/>
        <label>1</label>
    </ligand>
</feature>
<feature type="binding site" evidence="2">
    <location>
        <position position="52"/>
    </location>
    <ligand>
        <name>[2Fe-2S] cluster</name>
        <dbReference type="ChEBI" id="CHEBI:190135"/>
        <label>1</label>
    </ligand>
</feature>
<feature type="binding site" evidence="2">
    <location>
        <position position="55"/>
    </location>
    <ligand>
        <name>[2Fe-2S] cluster</name>
        <dbReference type="ChEBI" id="CHEBI:190135"/>
        <label>1</label>
    </ligand>
</feature>
<feature type="binding site" evidence="2">
    <location>
        <position position="77"/>
    </location>
    <ligand>
        <name>[2Fe-2S] cluster</name>
        <dbReference type="ChEBI" id="CHEBI:190135"/>
        <label>1</label>
    </ligand>
</feature>
<feature type="binding site" evidence="2">
    <location>
        <position position="117"/>
    </location>
    <ligand>
        <name>[2Fe-2S] cluster</name>
        <dbReference type="ChEBI" id="CHEBI:190135"/>
        <label>2</label>
    </ligand>
</feature>
<feature type="binding site" evidence="2">
    <location>
        <position position="120"/>
    </location>
    <ligand>
        <name>[2Fe-2S] cluster</name>
        <dbReference type="ChEBI" id="CHEBI:190135"/>
        <label>2</label>
    </ligand>
</feature>
<feature type="binding site" evidence="2">
    <location>
        <position position="152"/>
    </location>
    <ligand>
        <name>[2Fe-2S] cluster</name>
        <dbReference type="ChEBI" id="CHEBI:190135"/>
        <label>2</label>
    </ligand>
</feature>
<feature type="binding site" evidence="2">
    <location>
        <position position="154"/>
    </location>
    <ligand>
        <name>[2Fe-2S] cluster</name>
        <dbReference type="ChEBI" id="CHEBI:190135"/>
        <label>2</label>
    </ligand>
</feature>
<feature type="binding site" evidence="1">
    <location>
        <begin position="263"/>
        <end position="270"/>
    </location>
    <ligand>
        <name>FAD</name>
        <dbReference type="ChEBI" id="CHEBI:57692"/>
    </ligand>
</feature>
<feature type="binding site" evidence="1">
    <location>
        <position position="343"/>
    </location>
    <ligand>
        <name>FAD</name>
        <dbReference type="ChEBI" id="CHEBI:57692"/>
    </ligand>
</feature>
<feature type="binding site" evidence="1">
    <location>
        <begin position="353"/>
        <end position="357"/>
    </location>
    <ligand>
        <name>FAD</name>
        <dbReference type="ChEBI" id="CHEBI:57692"/>
    </ligand>
</feature>
<feature type="binding site" evidence="1">
    <location>
        <position position="366"/>
    </location>
    <ligand>
        <name>FAD</name>
        <dbReference type="ChEBI" id="CHEBI:57692"/>
    </ligand>
</feature>
<feature type="binding site" evidence="1">
    <location>
        <position position="414"/>
    </location>
    <ligand>
        <name>FAD</name>
        <dbReference type="ChEBI" id="CHEBI:57692"/>
    </ligand>
</feature>
<feature type="binding site" evidence="1">
    <location>
        <position position="432"/>
    </location>
    <ligand>
        <name>FAD</name>
        <dbReference type="ChEBI" id="CHEBI:57692"/>
    </ligand>
</feature>
<feature type="binding site" evidence="1">
    <location>
        <position position="780"/>
    </location>
    <ligand>
        <name>Mo-molybdopterin</name>
        <dbReference type="ChEBI" id="CHEBI:71302"/>
    </ligand>
    <ligandPart>
        <name>Mo</name>
        <dbReference type="ChEBI" id="CHEBI:28685"/>
    </ligandPart>
</feature>
<feature type="binding site" evidence="1">
    <location>
        <position position="811"/>
    </location>
    <ligand>
        <name>Mo-molybdopterin</name>
        <dbReference type="ChEBI" id="CHEBI:71302"/>
    </ligand>
    <ligandPart>
        <name>Mo</name>
        <dbReference type="ChEBI" id="CHEBI:28685"/>
    </ligandPart>
</feature>
<feature type="binding site" evidence="1">
    <location>
        <position position="815"/>
    </location>
    <ligand>
        <name>substrate</name>
    </ligand>
</feature>
<feature type="binding site" evidence="1">
    <location>
        <position position="893"/>
    </location>
    <ligand>
        <name>substrate</name>
    </ligand>
</feature>
<feature type="binding site" evidence="1">
    <location>
        <position position="925"/>
    </location>
    <ligand>
        <name>Mo-molybdopterin</name>
        <dbReference type="ChEBI" id="CHEBI:71302"/>
    </ligand>
    <ligandPart>
        <name>Mo</name>
        <dbReference type="ChEBI" id="CHEBI:28685"/>
    </ligandPart>
</feature>
<feature type="binding site" evidence="1">
    <location>
        <position position="927"/>
    </location>
    <ligand>
        <name>substrate</name>
    </ligand>
</feature>
<feature type="binding site" evidence="1">
    <location>
        <position position="1092"/>
    </location>
    <ligand>
        <name>Mo-molybdopterin</name>
        <dbReference type="ChEBI" id="CHEBI:71302"/>
    </ligand>
    <ligandPart>
        <name>Mo</name>
        <dbReference type="ChEBI" id="CHEBI:28685"/>
    </ligandPart>
</feature>
<feature type="sequence conflict" description="In Ref. 1; AAA29022." evidence="5" ref="1">
    <original>V</original>
    <variation>M</variation>
    <location>
        <position position="58"/>
    </location>
</feature>
<feature type="sequence conflict" description="In Ref. 1; AAA29022." evidence="5" ref="1">
    <original>T</original>
    <variation>A</variation>
    <location>
        <position position="200"/>
    </location>
</feature>
<feature type="sequence conflict" description="In Ref. 1; AAA29022 and 3; AAX13180." evidence="5" ref="1 3">
    <original>V</original>
    <variation>I</variation>
    <location>
        <position position="428"/>
    </location>
</feature>
<feature type="sequence conflict" description="In Ref. 1; AAA29022 and 3; AAX13180." evidence="5" ref="1 3">
    <original>G</original>
    <variation>E</variation>
    <location>
        <position position="461"/>
    </location>
</feature>
<feature type="sequence conflict" description="In Ref. 1; AAA29022." evidence="5" ref="1">
    <original>L</original>
    <variation>V</variation>
    <location>
        <position position="475"/>
    </location>
</feature>
<feature type="sequence conflict" description="In Ref. 3; AAX13180." evidence="5" ref="3">
    <original>E</original>
    <variation>D</variation>
    <location>
        <position position="734"/>
    </location>
</feature>
<feature type="sequence conflict" description="In Ref. 1; AAA29022." evidence="5" ref="1">
    <original>S</original>
    <variation>N</variation>
    <location>
        <position position="747"/>
    </location>
</feature>
<feature type="sequence conflict" description="In Ref. 1; AAA29022." evidence="5" ref="1">
    <original>A</original>
    <variation>G</variation>
    <location>
        <position position="762"/>
    </location>
</feature>
<feature type="sequence conflict" description="In Ref. 3; AAX13180." evidence="5" ref="3">
    <original>A</original>
    <variation>V</variation>
    <location>
        <position position="986"/>
    </location>
</feature>
<feature type="sequence conflict" description="In Ref. 1; AAA29022." evidence="5" ref="1">
    <location>
        <position position="1245"/>
    </location>
</feature>
<feature type="sequence conflict" description="In Ref. 1; AAA29022." evidence="5" ref="1">
    <original>C</original>
    <variation>F</variation>
    <location>
        <position position="1320"/>
    </location>
</feature>
<evidence type="ECO:0000250" key="1"/>
<evidence type="ECO:0000250" key="2">
    <source>
        <dbReference type="UniProtKB" id="P22985"/>
    </source>
</evidence>
<evidence type="ECO:0000255" key="3">
    <source>
        <dbReference type="PROSITE-ProRule" id="PRU00465"/>
    </source>
</evidence>
<evidence type="ECO:0000255" key="4">
    <source>
        <dbReference type="PROSITE-ProRule" id="PRU00718"/>
    </source>
</evidence>
<evidence type="ECO:0000305" key="5"/>
<dbReference type="EC" id="1.17.1.4"/>
<dbReference type="EMBL" id="M33977">
    <property type="protein sequence ID" value="AAA29022.1"/>
    <property type="molecule type" value="Genomic_DNA"/>
</dbReference>
<dbReference type="EMBL" id="CM000070">
    <property type="protein sequence ID" value="EAL27642.2"/>
    <property type="molecule type" value="Genomic_DNA"/>
</dbReference>
<dbReference type="EMBL" id="AY754605">
    <property type="protein sequence ID" value="AAX13180.1"/>
    <property type="molecule type" value="Genomic_DNA"/>
</dbReference>
<dbReference type="PIR" id="A31946">
    <property type="entry name" value="A31946"/>
</dbReference>
<dbReference type="RefSeq" id="XP_001358503.2">
    <property type="nucleotide sequence ID" value="XM_001358466.3"/>
</dbReference>
<dbReference type="SMR" id="P22811"/>
<dbReference type="FunCoup" id="P22811">
    <property type="interactions" value="300"/>
</dbReference>
<dbReference type="STRING" id="46245.P22811"/>
<dbReference type="EnsemblMetazoa" id="FBtr0283786">
    <property type="protein sequence ID" value="FBpp0282224"/>
    <property type="gene ID" value="FBgn0012736"/>
</dbReference>
<dbReference type="GeneID" id="4801405"/>
<dbReference type="KEGG" id="dpo:4801405"/>
<dbReference type="CTD" id="41605"/>
<dbReference type="eggNOG" id="KOG0430">
    <property type="taxonomic scope" value="Eukaryota"/>
</dbReference>
<dbReference type="HOGENOM" id="CLU_001681_1_2_1"/>
<dbReference type="InParanoid" id="P22811"/>
<dbReference type="OMA" id="PHPTQER"/>
<dbReference type="Proteomes" id="UP000001819">
    <property type="component" value="Chromosome 2"/>
</dbReference>
<dbReference type="Bgee" id="FBgn0012736">
    <property type="expression patterns" value="Expressed in insect adult head and 2 other cell types or tissues"/>
</dbReference>
<dbReference type="GO" id="GO:0005777">
    <property type="term" value="C:peroxisome"/>
    <property type="evidence" value="ECO:0007669"/>
    <property type="project" value="UniProtKB-SubCell"/>
</dbReference>
<dbReference type="GO" id="GO:0051537">
    <property type="term" value="F:2 iron, 2 sulfur cluster binding"/>
    <property type="evidence" value="ECO:0000250"/>
    <property type="project" value="UniProtKB"/>
</dbReference>
<dbReference type="GO" id="GO:0071949">
    <property type="term" value="F:FAD binding"/>
    <property type="evidence" value="ECO:0007669"/>
    <property type="project" value="InterPro"/>
</dbReference>
<dbReference type="GO" id="GO:0050660">
    <property type="term" value="F:flavin adenine dinucleotide binding"/>
    <property type="evidence" value="ECO:0000250"/>
    <property type="project" value="UniProtKB"/>
</dbReference>
<dbReference type="GO" id="GO:0005506">
    <property type="term" value="F:iron ion binding"/>
    <property type="evidence" value="ECO:0007669"/>
    <property type="project" value="InterPro"/>
</dbReference>
<dbReference type="GO" id="GO:0043546">
    <property type="term" value="F:molybdopterin cofactor binding"/>
    <property type="evidence" value="ECO:0000250"/>
    <property type="project" value="UniProtKB"/>
</dbReference>
<dbReference type="GO" id="GO:0004854">
    <property type="term" value="F:xanthine dehydrogenase activity"/>
    <property type="evidence" value="ECO:0000250"/>
    <property type="project" value="UniProtKB"/>
</dbReference>
<dbReference type="GO" id="GO:0009115">
    <property type="term" value="P:xanthine catabolic process"/>
    <property type="evidence" value="ECO:0000250"/>
    <property type="project" value="UniProtKB"/>
</dbReference>
<dbReference type="CDD" id="cd00207">
    <property type="entry name" value="fer2"/>
    <property type="match status" value="1"/>
</dbReference>
<dbReference type="FunFam" id="1.10.150.120:FF:000001">
    <property type="entry name" value="Aldehyde oxidase 1"/>
    <property type="match status" value="1"/>
</dbReference>
<dbReference type="FunFam" id="3.10.20.30:FF:000015">
    <property type="entry name" value="Aldehyde oxidase 1"/>
    <property type="match status" value="1"/>
</dbReference>
<dbReference type="FunFam" id="3.30.365.10:FF:000003">
    <property type="entry name" value="Aldehyde oxidase 1"/>
    <property type="match status" value="1"/>
</dbReference>
<dbReference type="FunFam" id="3.90.1170.50:FF:000001">
    <property type="entry name" value="Aldehyde oxidase 1"/>
    <property type="match status" value="1"/>
</dbReference>
<dbReference type="FunFam" id="3.30.365.10:FF:000001">
    <property type="entry name" value="Xanthine dehydrogenase oxidase"/>
    <property type="match status" value="1"/>
</dbReference>
<dbReference type="FunFam" id="3.30.365.10:FF:000004">
    <property type="entry name" value="Xanthine dehydrogenase oxidase"/>
    <property type="match status" value="1"/>
</dbReference>
<dbReference type="FunFam" id="3.30.43.10:FF:000001">
    <property type="entry name" value="Xanthine dehydrogenase/oxidase"/>
    <property type="match status" value="1"/>
</dbReference>
<dbReference type="FunFam" id="3.30.465.10:FF:000004">
    <property type="entry name" value="Xanthine dehydrogenase/oxidase"/>
    <property type="match status" value="1"/>
</dbReference>
<dbReference type="Gene3D" id="3.10.20.30">
    <property type="match status" value="1"/>
</dbReference>
<dbReference type="Gene3D" id="3.30.465.10">
    <property type="match status" value="1"/>
</dbReference>
<dbReference type="Gene3D" id="1.10.150.120">
    <property type="entry name" value="[2Fe-2S]-binding domain"/>
    <property type="match status" value="1"/>
</dbReference>
<dbReference type="Gene3D" id="3.90.1170.50">
    <property type="entry name" value="Aldehyde oxidase/xanthine dehydrogenase, a/b hammerhead"/>
    <property type="match status" value="1"/>
</dbReference>
<dbReference type="Gene3D" id="3.30.365.10">
    <property type="entry name" value="Aldehyde oxidase/xanthine dehydrogenase, molybdopterin binding domain"/>
    <property type="match status" value="4"/>
</dbReference>
<dbReference type="Gene3D" id="3.30.390.50">
    <property type="entry name" value="CO dehydrogenase flavoprotein, C-terminal domain"/>
    <property type="match status" value="1"/>
</dbReference>
<dbReference type="Gene3D" id="3.30.43.10">
    <property type="entry name" value="Uridine Diphospho-n-acetylenolpyruvylglucosamine Reductase, domain 2"/>
    <property type="match status" value="1"/>
</dbReference>
<dbReference type="InterPro" id="IPR002888">
    <property type="entry name" value="2Fe-2S-bd"/>
</dbReference>
<dbReference type="InterPro" id="IPR036884">
    <property type="entry name" value="2Fe-2S-bd_dom_sf"/>
</dbReference>
<dbReference type="InterPro" id="IPR036010">
    <property type="entry name" value="2Fe-2S_ferredoxin-like_sf"/>
</dbReference>
<dbReference type="InterPro" id="IPR001041">
    <property type="entry name" value="2Fe-2S_ferredoxin-type"/>
</dbReference>
<dbReference type="InterPro" id="IPR006058">
    <property type="entry name" value="2Fe2S_fd_BS"/>
</dbReference>
<dbReference type="InterPro" id="IPR000674">
    <property type="entry name" value="Ald_Oxase/Xan_DH_a/b"/>
</dbReference>
<dbReference type="InterPro" id="IPR036856">
    <property type="entry name" value="Ald_Oxase/Xan_DH_a/b_sf"/>
</dbReference>
<dbReference type="InterPro" id="IPR016208">
    <property type="entry name" value="Ald_Oxase/xanthine_DH-like"/>
</dbReference>
<dbReference type="InterPro" id="IPR008274">
    <property type="entry name" value="AldOxase/xan_DH_MoCoBD1"/>
</dbReference>
<dbReference type="InterPro" id="IPR046867">
    <property type="entry name" value="AldOxase/xan_DH_MoCoBD2"/>
</dbReference>
<dbReference type="InterPro" id="IPR037165">
    <property type="entry name" value="AldOxase/xan_DH_Mopterin-bd_sf"/>
</dbReference>
<dbReference type="InterPro" id="IPR012675">
    <property type="entry name" value="Beta-grasp_dom_sf"/>
</dbReference>
<dbReference type="InterPro" id="IPR005107">
    <property type="entry name" value="CO_DH_flav_C"/>
</dbReference>
<dbReference type="InterPro" id="IPR036683">
    <property type="entry name" value="CO_DH_flav_C_dom_sf"/>
</dbReference>
<dbReference type="InterPro" id="IPR016166">
    <property type="entry name" value="FAD-bd_PCMH"/>
</dbReference>
<dbReference type="InterPro" id="IPR036318">
    <property type="entry name" value="FAD-bd_PCMH-like_sf"/>
</dbReference>
<dbReference type="InterPro" id="IPR016167">
    <property type="entry name" value="FAD-bd_PCMH_sub1"/>
</dbReference>
<dbReference type="InterPro" id="IPR016169">
    <property type="entry name" value="FAD-bd_PCMH_sub2"/>
</dbReference>
<dbReference type="InterPro" id="IPR002346">
    <property type="entry name" value="Mopterin_DH_FAD-bd"/>
</dbReference>
<dbReference type="InterPro" id="IPR022407">
    <property type="entry name" value="OxRdtase_Mopterin_BS"/>
</dbReference>
<dbReference type="InterPro" id="IPR014307">
    <property type="entry name" value="Xanthine_DH_ssu"/>
</dbReference>
<dbReference type="NCBIfam" id="TIGR02963">
    <property type="entry name" value="xanthine_xdhA"/>
    <property type="match status" value="1"/>
</dbReference>
<dbReference type="PANTHER" id="PTHR45444">
    <property type="entry name" value="XANTHINE DEHYDROGENASE"/>
    <property type="match status" value="1"/>
</dbReference>
<dbReference type="PANTHER" id="PTHR45444:SF3">
    <property type="entry name" value="XANTHINE DEHYDROGENASE"/>
    <property type="match status" value="1"/>
</dbReference>
<dbReference type="Pfam" id="PF01315">
    <property type="entry name" value="Ald_Xan_dh_C"/>
    <property type="match status" value="1"/>
</dbReference>
<dbReference type="Pfam" id="PF03450">
    <property type="entry name" value="CO_deh_flav_C"/>
    <property type="match status" value="1"/>
</dbReference>
<dbReference type="Pfam" id="PF00941">
    <property type="entry name" value="FAD_binding_5"/>
    <property type="match status" value="1"/>
</dbReference>
<dbReference type="Pfam" id="PF00111">
    <property type="entry name" value="Fer2"/>
    <property type="match status" value="1"/>
</dbReference>
<dbReference type="Pfam" id="PF01799">
    <property type="entry name" value="Fer2_2"/>
    <property type="match status" value="1"/>
</dbReference>
<dbReference type="Pfam" id="PF02738">
    <property type="entry name" value="MoCoBD_1"/>
    <property type="match status" value="1"/>
</dbReference>
<dbReference type="Pfam" id="PF20256">
    <property type="entry name" value="MoCoBD_2"/>
    <property type="match status" value="1"/>
</dbReference>
<dbReference type="PIRSF" id="PIRSF000127">
    <property type="entry name" value="Xanthine_DH"/>
    <property type="match status" value="1"/>
</dbReference>
<dbReference type="SMART" id="SM01008">
    <property type="entry name" value="Ald_Xan_dh_C"/>
    <property type="match status" value="1"/>
</dbReference>
<dbReference type="SMART" id="SM01092">
    <property type="entry name" value="CO_deh_flav_C"/>
    <property type="match status" value="1"/>
</dbReference>
<dbReference type="SUPFAM" id="SSF54292">
    <property type="entry name" value="2Fe-2S ferredoxin-like"/>
    <property type="match status" value="1"/>
</dbReference>
<dbReference type="SUPFAM" id="SSF55447">
    <property type="entry name" value="CO dehydrogenase flavoprotein C-terminal domain-like"/>
    <property type="match status" value="1"/>
</dbReference>
<dbReference type="SUPFAM" id="SSF47741">
    <property type="entry name" value="CO dehydrogenase ISP C-domain like"/>
    <property type="match status" value="1"/>
</dbReference>
<dbReference type="SUPFAM" id="SSF54665">
    <property type="entry name" value="CO dehydrogenase molybdoprotein N-domain-like"/>
    <property type="match status" value="1"/>
</dbReference>
<dbReference type="SUPFAM" id="SSF56176">
    <property type="entry name" value="FAD-binding/transporter-associated domain-like"/>
    <property type="match status" value="1"/>
</dbReference>
<dbReference type="SUPFAM" id="SSF56003">
    <property type="entry name" value="Molybdenum cofactor-binding domain"/>
    <property type="match status" value="1"/>
</dbReference>
<dbReference type="PROSITE" id="PS00197">
    <property type="entry name" value="2FE2S_FER_1"/>
    <property type="match status" value="1"/>
</dbReference>
<dbReference type="PROSITE" id="PS51085">
    <property type="entry name" value="2FE2S_FER_2"/>
    <property type="match status" value="1"/>
</dbReference>
<dbReference type="PROSITE" id="PS51387">
    <property type="entry name" value="FAD_PCMH"/>
    <property type="match status" value="1"/>
</dbReference>
<dbReference type="PROSITE" id="PS00559">
    <property type="entry name" value="MOLYBDOPTERIN_EUK"/>
    <property type="match status" value="1"/>
</dbReference>
<protein>
    <recommendedName>
        <fullName>Xanthine dehydrogenase</fullName>
        <shortName>XD</shortName>
        <ecNumber>1.17.1.4</ecNumber>
    </recommendedName>
    <alternativeName>
        <fullName>Protein rosy locus</fullName>
    </alternativeName>
</protein>
<gene>
    <name type="primary">ry</name>
    <name type="synonym">XDH</name>
    <name type="ORF">GA20500</name>
</gene>
<proteinExistence type="inferred from homology"/>
<organism>
    <name type="scientific">Drosophila pseudoobscura pseudoobscura</name>
    <name type="common">Fruit fly</name>
    <dbReference type="NCBI Taxonomy" id="46245"/>
    <lineage>
        <taxon>Eukaryota</taxon>
        <taxon>Metazoa</taxon>
        <taxon>Ecdysozoa</taxon>
        <taxon>Arthropoda</taxon>
        <taxon>Hexapoda</taxon>
        <taxon>Insecta</taxon>
        <taxon>Pterygota</taxon>
        <taxon>Neoptera</taxon>
        <taxon>Endopterygota</taxon>
        <taxon>Diptera</taxon>
        <taxon>Brachycera</taxon>
        <taxon>Muscomorpha</taxon>
        <taxon>Ephydroidea</taxon>
        <taxon>Drosophilidae</taxon>
        <taxon>Drosophila</taxon>
        <taxon>Sophophora</taxon>
    </lineage>
</organism>
<reference key="1">
    <citation type="journal article" date="1989" name="Mol. Biol. Evol.">
        <title>Nucleotide sequence of the Xdh region in Drosophila pseudoobscura and an analysis of the evolution of synonymous codons.</title>
        <authorList>
            <person name="Riley M.A."/>
        </authorList>
    </citation>
    <scope>NUCLEOTIDE SEQUENCE [GENOMIC DNA]</scope>
</reference>
<reference key="2">
    <citation type="journal article" date="2005" name="Genome Res.">
        <title>Comparative genome sequencing of Drosophila pseudoobscura: chromosomal, gene, and cis-element evolution.</title>
        <authorList>
            <person name="Richards S."/>
            <person name="Liu Y."/>
            <person name="Bettencourt B.R."/>
            <person name="Hradecky P."/>
            <person name="Letovsky S."/>
            <person name="Nielsen R."/>
            <person name="Thornton K."/>
            <person name="Hubisz M.J."/>
            <person name="Chen R."/>
            <person name="Meisel R.P."/>
            <person name="Couronne O."/>
            <person name="Hua S."/>
            <person name="Smith M.A."/>
            <person name="Zhang P."/>
            <person name="Liu J."/>
            <person name="Bussemaker H.J."/>
            <person name="van Batenburg M.F."/>
            <person name="Howells S.L."/>
            <person name="Scherer S.E."/>
            <person name="Sodergren E."/>
            <person name="Matthews B.B."/>
            <person name="Crosby M.A."/>
            <person name="Schroeder A.J."/>
            <person name="Ortiz-Barrientos D."/>
            <person name="Rives C.M."/>
            <person name="Metzker M.L."/>
            <person name="Muzny D.M."/>
            <person name="Scott G."/>
            <person name="Steffen D."/>
            <person name="Wheeler D.A."/>
            <person name="Worley K.C."/>
            <person name="Havlak P."/>
            <person name="Durbin K.J."/>
            <person name="Egan A."/>
            <person name="Gill R."/>
            <person name="Hume J."/>
            <person name="Morgan M.B."/>
            <person name="Miner G."/>
            <person name="Hamilton C."/>
            <person name="Huang Y."/>
            <person name="Waldron L."/>
            <person name="Verduzco D."/>
            <person name="Clerc-Blankenburg K.P."/>
            <person name="Dubchak I."/>
            <person name="Noor M.A.F."/>
            <person name="Anderson W."/>
            <person name="White K.P."/>
            <person name="Clark A.G."/>
            <person name="Schaeffer S.W."/>
            <person name="Gelbart W.M."/>
            <person name="Weinstock G.M."/>
            <person name="Gibbs R.A."/>
        </authorList>
    </citation>
    <scope>NUCLEOTIDE SEQUENCE [LARGE SCALE GENOMIC DNA]</scope>
    <source>
        <strain>MV2-25 / Tucson 14011-0121.94</strain>
    </source>
</reference>
<reference key="3">
    <citation type="journal article" date="2005" name="Genetics">
        <title>Patterns of selection on synonymous and nonsynonymous variants in Drosophila miranda.</title>
        <authorList>
            <person name="Bartolome C."/>
            <person name="Maside X."/>
            <person name="Yi S."/>
            <person name="Grant A.L."/>
            <person name="Charlesworth B."/>
        </authorList>
    </citation>
    <scope>NUCLEOTIDE SEQUENCE [GENOMIC DNA] OF 298-1062</scope>
</reference>
<sequence length="1343" mass="147349">MSGQQKTSELVFFVNGKKVTDTNPDPECTLLTYLRDKLRLCGTKLGCAEGGCGACTVVISRMDRGQNKIRHLAVNACLTPVCAMHGCAVTTVEGIGSTRTRLHPVQERLAKAHGSQCGFCTPGIVMSMYALLRSAEQPSMRDLEVAFQGNLCRCTGYRPILEGYKTFTKEFACGMGDKCCKVNGKGCGGGDDTQSVTDDTLFERSQFQPLDPSQEPIFPPELQLTPTYDSESLIFSSERVTWYRPTTLQELLQLKSDHPSAKLVVGNTEVGVEVKFKHFLYPHLINPTQVPELLEVRESEESIYFGAAVSLMEIDALLRQRIEELPEAQTRLFQCAVDMLHYFAGKQIRNVACLGGNIMTGSPISDMNPVLTAAGARLEVASLVGGKTSHRTVHMGTGFFTGYRRNVIEPHEVLLGIHFQKTTPDQHVVAFKQARRRDDDIAIVNAAVNVRFEPRTNVVAGISMAFGGMAPTTVLAPRTSQLMVKQPLDHHLVERVAESLCGELPLAASAPGGMIAYRRALVVSLIFKAYLSISRKLSEAGIISTDAIPAEERSGAELFHTPVLRSAQLFERVCSEQPVCDPIGRPEVHAAALKQATGEAIYTDDIPRMDGELYLGLVLSTKPRAKITKLDASEALALEGVHAFFSHKDLTEHENEVGPVFHDEHVFAAAEVHCYGQIVGAVAADNKALAQRAARLVRVEYEELAPVIVTIEQAIEHGSYFPDYPRYVNKGNVEEAFAAAEHTYEGSCRMGGQEHFYLETHAAVAVPRDSDELELFCSTQHPSEVQKLVAHVTTLPAHRVVCRAKRLGGGFGGKESRGISVALPVALAAYRLRRPVRCMLDRDEDMLITGTRHPFLFKYKVAFASDGLITACDIECYNNAGWSMDLSFSVLERAMYHFENCYRIPNVRVGGWVCKTNLPSNTAFRGFGGPQGMFAGEHIIRDVARIVGRDVLDVMRLNFYKTGDITHYNQKLEHFPIERCLDDCLAQSRYHEKRTEIAKFNRENRWRKRGMAVIPTKYGIAFGVMHLNQAGALINVYGDGSVLLSHGGVEIGQGLNTKMIQCAARALGIPIELIHISETATDKVPNTSPTAASVGSDLNGMAVLDACEKLNKRLAPIKEALPQGTWQEWINKAYFDRVSLSATGFYAMPGIGYHPETNPNARTYSYYTNGVGISVVEIDCLTGDHQVLSTDIVMDIGSSINPAIDIGQIEGAFMQGYGLFTLEELMYSPQGMLYSRGPGMYKLPGFADIPGEFNVSLLTGAPNPRAVYSSKAVGEPPLFIGSSAFFAIKEAIAAARQEQGLTGDFPLEAPSTSARIRMACQDKFTNLLEIPEEGSFTPWNIVP</sequence>
<name>XDH_DROPS</name>
<comment type="function">
    <text evidence="1">Key enzyme in purine degradation. Catalyzes the oxidation of hypoxanthine to xanthine. Catalyzes the oxidation of xanthine to uric acid (By similarity).</text>
</comment>
<comment type="catalytic activity">
    <reaction>
        <text>xanthine + NAD(+) + H2O = urate + NADH + H(+)</text>
        <dbReference type="Rhea" id="RHEA:16669"/>
        <dbReference type="ChEBI" id="CHEBI:15377"/>
        <dbReference type="ChEBI" id="CHEBI:15378"/>
        <dbReference type="ChEBI" id="CHEBI:17712"/>
        <dbReference type="ChEBI" id="CHEBI:17775"/>
        <dbReference type="ChEBI" id="CHEBI:57540"/>
        <dbReference type="ChEBI" id="CHEBI:57945"/>
        <dbReference type="EC" id="1.17.1.4"/>
    </reaction>
</comment>
<comment type="catalytic activity">
    <reaction>
        <text>hypoxanthine + NAD(+) + H2O = xanthine + NADH + H(+)</text>
        <dbReference type="Rhea" id="RHEA:24670"/>
        <dbReference type="ChEBI" id="CHEBI:15377"/>
        <dbReference type="ChEBI" id="CHEBI:15378"/>
        <dbReference type="ChEBI" id="CHEBI:17368"/>
        <dbReference type="ChEBI" id="CHEBI:17712"/>
        <dbReference type="ChEBI" id="CHEBI:57540"/>
        <dbReference type="ChEBI" id="CHEBI:57945"/>
        <dbReference type="EC" id="1.17.1.4"/>
    </reaction>
</comment>
<comment type="cofactor">
    <cofactor evidence="1">
        <name>FAD</name>
        <dbReference type="ChEBI" id="CHEBI:57692"/>
    </cofactor>
</comment>
<comment type="cofactor">
    <cofactor evidence="1">
        <name>Mo-molybdopterin</name>
        <dbReference type="ChEBI" id="CHEBI:71302"/>
    </cofactor>
    <text evidence="1">Binds 1 Mo-molybdopterin (Mo-MPT) cofactor per subunit.</text>
</comment>
<comment type="cofactor">
    <cofactor evidence="2">
        <name>[2Fe-2S] cluster</name>
        <dbReference type="ChEBI" id="CHEBI:190135"/>
    </cofactor>
    <text evidence="2">Binds 2 [2Fe-2S] clusters per subunit.</text>
</comment>
<comment type="subunit">
    <text evidence="1">Homodimer.</text>
</comment>
<comment type="subcellular location">
    <subcellularLocation>
        <location evidence="1">Peroxisome</location>
    </subcellularLocation>
</comment>
<comment type="similarity">
    <text evidence="5">Belongs to the xanthine dehydrogenase family.</text>
</comment>
<accession>P22811</accession>
<accession>Q299Q9</accession>
<accession>Q56RA2</accession>